<feature type="chain" id="PRO_0000217749" description="Leukotriene C4 synthase">
    <location>
        <begin position="1"/>
        <end position="150"/>
    </location>
</feature>
<feature type="topological domain" description="Cytoplasmic" evidence="1">
    <location>
        <begin position="1"/>
        <end position="6"/>
    </location>
</feature>
<feature type="transmembrane region" description="Helical" evidence="1">
    <location>
        <begin position="7"/>
        <end position="27"/>
    </location>
</feature>
<feature type="topological domain" description="Lumenal" evidence="1">
    <location>
        <begin position="28"/>
        <end position="48"/>
    </location>
</feature>
<feature type="transmembrane region" description="Helical" evidence="1">
    <location>
        <begin position="49"/>
        <end position="69"/>
    </location>
</feature>
<feature type="topological domain" description="Cytoplasmic" evidence="1">
    <location>
        <begin position="70"/>
        <end position="73"/>
    </location>
</feature>
<feature type="transmembrane region" description="Helical" evidence="1">
    <location>
        <begin position="74"/>
        <end position="94"/>
    </location>
</feature>
<feature type="topological domain" description="Lumenal" evidence="1">
    <location>
        <begin position="95"/>
        <end position="104"/>
    </location>
</feature>
<feature type="transmembrane region" description="Helical" evidence="1">
    <location>
        <begin position="105"/>
        <end position="124"/>
    </location>
</feature>
<feature type="topological domain" description="Cytoplasmic" evidence="1">
    <location>
        <begin position="125"/>
        <end position="150"/>
    </location>
</feature>
<feature type="active site" description="Proton donor" evidence="1">
    <location>
        <position position="31"/>
    </location>
</feature>
<feature type="active site" description="Proton acceptor" evidence="1">
    <location>
        <position position="104"/>
    </location>
</feature>
<feature type="binding site" evidence="1">
    <location>
        <position position="30"/>
    </location>
    <ligand>
        <name>glutathione</name>
        <dbReference type="ChEBI" id="CHEBI:57925"/>
    </ligand>
</feature>
<feature type="binding site" evidence="1">
    <location>
        <begin position="51"/>
        <end position="55"/>
    </location>
    <ligand>
        <name>glutathione</name>
        <dbReference type="ChEBI" id="CHEBI:57925"/>
    </ligand>
</feature>
<feature type="binding site" evidence="1">
    <location>
        <position position="53"/>
    </location>
    <ligand>
        <name>glutathione</name>
        <dbReference type="ChEBI" id="CHEBI:57925"/>
    </ligand>
</feature>
<feature type="binding site" evidence="1">
    <location>
        <begin position="58"/>
        <end position="59"/>
    </location>
    <ligand>
        <name>glutathione</name>
        <dbReference type="ChEBI" id="CHEBI:57925"/>
    </ligand>
</feature>
<feature type="binding site" evidence="1">
    <location>
        <begin position="93"/>
        <end position="97"/>
    </location>
    <ligand>
        <name>glutathione</name>
        <dbReference type="ChEBI" id="CHEBI:57925"/>
    </ligand>
</feature>
<feature type="modified residue" description="Phosphoserine" evidence="1">
    <location>
        <position position="36"/>
    </location>
</feature>
<feature type="helix" evidence="5">
    <location>
        <begin position="2"/>
        <end position="5"/>
    </location>
</feature>
<feature type="helix" evidence="5">
    <location>
        <begin position="6"/>
        <end position="32"/>
    </location>
</feature>
<feature type="helix" evidence="5">
    <location>
        <begin position="44"/>
        <end position="73"/>
    </location>
</feature>
<feature type="helix" evidence="5">
    <location>
        <begin position="76"/>
        <end position="99"/>
    </location>
</feature>
<feature type="helix" evidence="5">
    <location>
        <begin position="102"/>
        <end position="104"/>
    </location>
</feature>
<feature type="helix" evidence="5">
    <location>
        <begin position="105"/>
        <end position="141"/>
    </location>
</feature>
<reference key="1">
    <citation type="journal article" date="1997" name="Eur. J. Biochem.">
        <title>Molecular cloning of the gene for mouse leukotriene-C4 synthase.</title>
        <authorList>
            <person name="Penrose J.F."/>
            <person name="Baldasaro M.H."/>
            <person name="Webster M."/>
            <person name="Xu K."/>
            <person name="Austen K.F."/>
            <person name="Lam B.K."/>
        </authorList>
    </citation>
    <scope>NUCLEOTIDE SEQUENCE [MRNA]</scope>
</reference>
<reference key="2">
    <citation type="journal article" date="2009" name="PLoS Biol.">
        <title>Lineage-specific biology revealed by a finished genome assembly of the mouse.</title>
        <authorList>
            <person name="Church D.M."/>
            <person name="Goodstadt L."/>
            <person name="Hillier L.W."/>
            <person name="Zody M.C."/>
            <person name="Goldstein S."/>
            <person name="She X."/>
            <person name="Bult C.J."/>
            <person name="Agarwala R."/>
            <person name="Cherry J.L."/>
            <person name="DiCuccio M."/>
            <person name="Hlavina W."/>
            <person name="Kapustin Y."/>
            <person name="Meric P."/>
            <person name="Maglott D."/>
            <person name="Birtle Z."/>
            <person name="Marques A.C."/>
            <person name="Graves T."/>
            <person name="Zhou S."/>
            <person name="Teague B."/>
            <person name="Potamousis K."/>
            <person name="Churas C."/>
            <person name="Place M."/>
            <person name="Herschleb J."/>
            <person name="Runnheim R."/>
            <person name="Forrest D."/>
            <person name="Amos-Landgraf J."/>
            <person name="Schwartz D.C."/>
            <person name="Cheng Z."/>
            <person name="Lindblad-Toh K."/>
            <person name="Eichler E.E."/>
            <person name="Ponting C.P."/>
        </authorList>
    </citation>
    <scope>NUCLEOTIDE SEQUENCE [LARGE SCALE GENOMIC DNA]</scope>
    <source>
        <strain>C57BL/6J</strain>
    </source>
</reference>
<reference key="3">
    <citation type="journal article" date="1995" name="Biochim. Biophys. Acta">
        <title>Two step purification of human and murine leukotriene C4 synthase.</title>
        <authorList>
            <person name="Goppelt-Struebe M."/>
        </authorList>
    </citation>
    <scope>PROTEIN SEQUENCE OF 1-27</scope>
    <source>
        <tissue>Mast cell</tissue>
    </source>
</reference>
<reference key="4">
    <citation type="journal article" date="1996" name="Eur. J. Biochem.">
        <title>Molecular cloning, expression and characterization of mouse leukotriene C4 synthase.</title>
        <authorList>
            <person name="Lam B.K."/>
            <person name="Penrose J.F."/>
            <person name="Rokach J."/>
            <person name="Xu K."/>
            <person name="Baldasaro M.H."/>
            <person name="Austen K.F."/>
        </authorList>
    </citation>
    <scope>IDENTIFICATION</scope>
    <scope>TISSUE SPECIFICITY</scope>
    <scope>CATALYTIC ACTIVITY</scope>
    <scope>BIOPHYSICOCHEMICAL PROPERTIES</scope>
    <scope>FUNCTION</scope>
</reference>
<reference key="5">
    <citation type="journal article" date="2001" name="J. Biol. Chem.">
        <title>Attenuated zymosan-induced peritoneal vascular permeability and IgE-dependent passive cutaneous anaphylaxis in mice lacking leukotriene C4 synthase.</title>
        <authorList>
            <person name="Kanaoka Y."/>
            <person name="Maekawa A."/>
            <person name="Penrose J.F."/>
            <person name="Austen K.F."/>
            <person name="Lam B.K."/>
        </authorList>
    </citation>
    <scope>DISRUPTION PHENOTYPE</scope>
    <scope>CATALYTIC ACTIVITY</scope>
    <scope>FUNCTION</scope>
</reference>
<name>LTC4S_MOUSE</name>
<proteinExistence type="evidence at protein level"/>
<evidence type="ECO:0000250" key="1">
    <source>
        <dbReference type="UniProtKB" id="Q16873"/>
    </source>
</evidence>
<evidence type="ECO:0000269" key="2">
    <source>
    </source>
</evidence>
<evidence type="ECO:0000269" key="3">
    <source>
    </source>
</evidence>
<evidence type="ECO:0000305" key="4"/>
<evidence type="ECO:0007829" key="5">
    <source>
        <dbReference type="PDB" id="4NTF"/>
    </source>
</evidence>
<dbReference type="EC" id="4.4.1.20" evidence="2 3"/>
<dbReference type="EC" id="2.5.1.-" evidence="1"/>
<dbReference type="EMBL" id="U27195">
    <property type="protein sequence ID" value="AAA75042.1"/>
    <property type="molecule type" value="mRNA"/>
</dbReference>
<dbReference type="EMBL" id="AL627187">
    <property type="status" value="NOT_ANNOTATED_CDS"/>
    <property type="molecule type" value="Genomic_DNA"/>
</dbReference>
<dbReference type="CCDS" id="CCDS24631.1"/>
<dbReference type="PIR" id="S68961">
    <property type="entry name" value="S68961"/>
</dbReference>
<dbReference type="RefSeq" id="NP_032547.1">
    <property type="nucleotide sequence ID" value="NM_008521.3"/>
</dbReference>
<dbReference type="PDB" id="4NTA">
    <property type="method" value="X-ray"/>
    <property type="resolution" value="2.70 A"/>
    <property type="chains" value="A=2-150"/>
</dbReference>
<dbReference type="PDB" id="4NTB">
    <property type="method" value="X-ray"/>
    <property type="resolution" value="2.70 A"/>
    <property type="chains" value="A=2-150"/>
</dbReference>
<dbReference type="PDB" id="4NTF">
    <property type="method" value="X-ray"/>
    <property type="resolution" value="2.65 A"/>
    <property type="chains" value="A=2-150"/>
</dbReference>
<dbReference type="PDBsum" id="4NTA"/>
<dbReference type="PDBsum" id="4NTB"/>
<dbReference type="PDBsum" id="4NTF"/>
<dbReference type="SMR" id="Q60860"/>
<dbReference type="FunCoup" id="Q60860">
    <property type="interactions" value="316"/>
</dbReference>
<dbReference type="STRING" id="10090.ENSMUSP00000099833"/>
<dbReference type="SwissLipids" id="SLP:000001453"/>
<dbReference type="iPTMnet" id="Q60860"/>
<dbReference type="PhosphoSitePlus" id="Q60860"/>
<dbReference type="PaxDb" id="10090-ENSMUSP00000099833"/>
<dbReference type="PeptideAtlas" id="Q60860"/>
<dbReference type="ProteomicsDB" id="252682"/>
<dbReference type="DNASU" id="17001"/>
<dbReference type="Ensembl" id="ENSMUST00000102772.4">
    <property type="protein sequence ID" value="ENSMUSP00000099833.4"/>
    <property type="gene ID" value="ENSMUSG00000020377.16"/>
</dbReference>
<dbReference type="GeneID" id="17001"/>
<dbReference type="KEGG" id="mmu:17001"/>
<dbReference type="UCSC" id="uc007isa.1">
    <property type="organism name" value="mouse"/>
</dbReference>
<dbReference type="AGR" id="MGI:107498"/>
<dbReference type="CTD" id="4056"/>
<dbReference type="MGI" id="MGI:107498">
    <property type="gene designation" value="Ltc4s"/>
</dbReference>
<dbReference type="VEuPathDB" id="HostDB:ENSMUSG00000020377"/>
<dbReference type="eggNOG" id="ENOG502RZYY">
    <property type="taxonomic scope" value="Eukaryota"/>
</dbReference>
<dbReference type="GeneTree" id="ENSGT00900000143680"/>
<dbReference type="HOGENOM" id="CLU_110291_3_0_1"/>
<dbReference type="InParanoid" id="Q60860"/>
<dbReference type="OMA" id="AGIYFHE"/>
<dbReference type="TreeFam" id="TF105328"/>
<dbReference type="BRENDA" id="4.4.1.20">
    <property type="organism ID" value="3474"/>
</dbReference>
<dbReference type="Reactome" id="R-MMU-2142688">
    <property type="pathway name" value="Synthesis of 5-eicosatetraenoic acids"/>
</dbReference>
<dbReference type="Reactome" id="R-MMU-2142691">
    <property type="pathway name" value="Synthesis of Leukotrienes (LT) and Eoxins (EX)"/>
</dbReference>
<dbReference type="Reactome" id="R-MMU-2142700">
    <property type="pathway name" value="Biosynthesis of Lipoxins (LX)"/>
</dbReference>
<dbReference type="Reactome" id="R-MMU-9026762">
    <property type="pathway name" value="Biosynthesis of maresin conjugates in tissue regeneration (MCTR)"/>
</dbReference>
<dbReference type="Reactome" id="R-MMU-9026766">
    <property type="pathway name" value="Biosynthesis of protectin and resolvin conjugates in tissue regeneration (PCTR and RCTR)"/>
</dbReference>
<dbReference type="UniPathway" id="UPA00879"/>
<dbReference type="BioGRID-ORCS" id="17001">
    <property type="hits" value="3 hits in 79 CRISPR screens"/>
</dbReference>
<dbReference type="ChiTaRS" id="Ltc4s">
    <property type="organism name" value="mouse"/>
</dbReference>
<dbReference type="EvolutionaryTrace" id="Q60860"/>
<dbReference type="PRO" id="PR:Q60860"/>
<dbReference type="Proteomes" id="UP000000589">
    <property type="component" value="Chromosome 11"/>
</dbReference>
<dbReference type="RNAct" id="Q60860">
    <property type="molecule type" value="protein"/>
</dbReference>
<dbReference type="Bgee" id="ENSMUSG00000020377">
    <property type="expression patterns" value="Expressed in choroid plexus of fourth ventricle and 87 other cell types or tissues"/>
</dbReference>
<dbReference type="ExpressionAtlas" id="Q60860">
    <property type="expression patterns" value="baseline and differential"/>
</dbReference>
<dbReference type="GO" id="GO:0005789">
    <property type="term" value="C:endoplasmic reticulum membrane"/>
    <property type="evidence" value="ECO:0000250"/>
    <property type="project" value="UniProtKB"/>
</dbReference>
<dbReference type="GO" id="GO:0005635">
    <property type="term" value="C:nuclear envelope"/>
    <property type="evidence" value="ECO:0000250"/>
    <property type="project" value="UniProtKB"/>
</dbReference>
<dbReference type="GO" id="GO:0031965">
    <property type="term" value="C:nuclear membrane"/>
    <property type="evidence" value="ECO:0000250"/>
    <property type="project" value="UniProtKB"/>
</dbReference>
<dbReference type="GO" id="GO:0005640">
    <property type="term" value="C:nuclear outer membrane"/>
    <property type="evidence" value="ECO:0000250"/>
    <property type="project" value="UniProtKB"/>
</dbReference>
<dbReference type="GO" id="GO:0008047">
    <property type="term" value="F:enzyme activator activity"/>
    <property type="evidence" value="ECO:0007669"/>
    <property type="project" value="InterPro"/>
</dbReference>
<dbReference type="GO" id="GO:0042802">
    <property type="term" value="F:identical protein binding"/>
    <property type="evidence" value="ECO:0007669"/>
    <property type="project" value="Ensembl"/>
</dbReference>
<dbReference type="GO" id="GO:0004464">
    <property type="term" value="F:leukotriene-C4 synthase activity"/>
    <property type="evidence" value="ECO:0000314"/>
    <property type="project" value="UniProtKB"/>
</dbReference>
<dbReference type="GO" id="GO:0008289">
    <property type="term" value="F:lipid binding"/>
    <property type="evidence" value="ECO:0000314"/>
    <property type="project" value="MGI"/>
</dbReference>
<dbReference type="GO" id="GO:0016740">
    <property type="term" value="F:transferase activity"/>
    <property type="evidence" value="ECO:0007669"/>
    <property type="project" value="UniProtKB-KW"/>
</dbReference>
<dbReference type="GO" id="GO:0019370">
    <property type="term" value="P:leukotriene biosynthetic process"/>
    <property type="evidence" value="ECO:0007669"/>
    <property type="project" value="UniProtKB-KW"/>
</dbReference>
<dbReference type="GO" id="GO:0006691">
    <property type="term" value="P:leukotriene metabolic process"/>
    <property type="evidence" value="ECO:0000314"/>
    <property type="project" value="MGI"/>
</dbReference>
<dbReference type="GO" id="GO:0042759">
    <property type="term" value="P:long-chain fatty acid biosynthetic process"/>
    <property type="evidence" value="ECO:0007669"/>
    <property type="project" value="Ensembl"/>
</dbReference>
<dbReference type="FunFam" id="1.20.120.550:FF:000003">
    <property type="entry name" value="Leukotriene C4 synthase"/>
    <property type="match status" value="1"/>
</dbReference>
<dbReference type="Gene3D" id="1.20.120.550">
    <property type="entry name" value="Membrane associated eicosanoid/glutathione metabolism-like domain"/>
    <property type="match status" value="1"/>
</dbReference>
<dbReference type="InterPro" id="IPR001446">
    <property type="entry name" value="5_LipOase_AP"/>
</dbReference>
<dbReference type="InterPro" id="IPR018295">
    <property type="entry name" value="FLAP/GST2/LTC4S_CS"/>
</dbReference>
<dbReference type="InterPro" id="IPR050997">
    <property type="entry name" value="MAPEG"/>
</dbReference>
<dbReference type="InterPro" id="IPR023352">
    <property type="entry name" value="MAPEG-like_dom_sf"/>
</dbReference>
<dbReference type="InterPro" id="IPR001129">
    <property type="entry name" value="Membr-assoc_MAPEG"/>
</dbReference>
<dbReference type="PANTHER" id="PTHR10250:SF4">
    <property type="entry name" value="LEUKOTRIENE C4 SYNTHASE"/>
    <property type="match status" value="1"/>
</dbReference>
<dbReference type="PANTHER" id="PTHR10250">
    <property type="entry name" value="MICROSOMAL GLUTATHIONE S-TRANSFERASE"/>
    <property type="match status" value="1"/>
</dbReference>
<dbReference type="Pfam" id="PF01124">
    <property type="entry name" value="MAPEG"/>
    <property type="match status" value="1"/>
</dbReference>
<dbReference type="PRINTS" id="PR00488">
    <property type="entry name" value="5LPOXGNASEAP"/>
</dbReference>
<dbReference type="SUPFAM" id="SSF161084">
    <property type="entry name" value="MAPEG domain-like"/>
    <property type="match status" value="1"/>
</dbReference>
<dbReference type="PROSITE" id="PS01297">
    <property type="entry name" value="FLAP_GST2_LTC4S"/>
    <property type="match status" value="1"/>
</dbReference>
<comment type="function">
    <text evidence="1 2 3">Catalyzes the conjugation of leukotriene A4 with reduced glutathione (GSH) to form leukotriene C4 with high specificity (PubMed:11319240, PubMed:8706658). Can also catalyze the transfer of a glutathionyl group from glutathione (GSH) to 13(S),14(S)-epoxy-docosahexaenoic acid to form maresin conjugate in tissue regeneration 1 (MCTR1), a bioactive lipid mediator that possess potent anti-inflammatory and proresolving actions (By similarity).</text>
</comment>
<comment type="catalytic activity">
    <reaction evidence="2 3">
        <text>leukotriene C4 = leukotriene A4 + glutathione</text>
        <dbReference type="Rhea" id="RHEA:17617"/>
        <dbReference type="ChEBI" id="CHEBI:57463"/>
        <dbReference type="ChEBI" id="CHEBI:57925"/>
        <dbReference type="ChEBI" id="CHEBI:57973"/>
        <dbReference type="EC" id="4.4.1.20"/>
    </reaction>
    <physiologicalReaction direction="right-to-left" evidence="1">
        <dbReference type="Rhea" id="RHEA:17619"/>
    </physiologicalReaction>
</comment>
<comment type="catalytic activity">
    <reaction evidence="1">
        <text>(13S,14S)-epoxy-(4Z,7Z,9E,11E,16Z,19Z)-docosahexaenoate + glutathione = (13R)-S-glutathionyl-(14S)-hydroxy-(4Z,7Z,9E,11E,16Z,19Z)-docosahexaenoate</text>
        <dbReference type="Rhea" id="RHEA:53508"/>
        <dbReference type="ChEBI" id="CHEBI:57925"/>
        <dbReference type="ChEBI" id="CHEBI:131958"/>
        <dbReference type="ChEBI" id="CHEBI:137407"/>
    </reaction>
    <physiologicalReaction direction="left-to-right" evidence="1">
        <dbReference type="Rhea" id="RHEA:53509"/>
    </physiologicalReaction>
</comment>
<comment type="activity regulation">
    <text evidence="1">Inhibited by MK886.</text>
</comment>
<comment type="biophysicochemical properties">
    <kinetics>
        <KM evidence="3">10.3 uM for leukotriene A4</KM>
        <KM evidence="3">1.9 uM for glutathione</KM>
        <Vmax evidence="3">2.3 umol/min/mg enzyme with leukotriene A4 as substrate</Vmax>
        <Vmax evidence="3">2.2 umol/min/mg enzyme with glutathione as substrate</Vmax>
    </kinetics>
</comment>
<comment type="pathway">
    <text evidence="1">Lipid metabolism; leukotriene C4 biosynthesis.</text>
</comment>
<comment type="subunit">
    <text evidence="1">Homotrimer. Interacts with ALOX5AP and ALOX5.</text>
</comment>
<comment type="subcellular location">
    <subcellularLocation>
        <location evidence="1">Nucleus outer membrane</location>
        <topology evidence="1">Multi-pass membrane protein</topology>
    </subcellularLocation>
    <subcellularLocation>
        <location evidence="1">Endoplasmic reticulum membrane</location>
        <topology evidence="1">Multi-pass membrane protein</topology>
    </subcellularLocation>
    <subcellularLocation>
        <location evidence="1">Nucleus membrane</location>
        <topology evidence="1">Multi-pass membrane protein</topology>
    </subcellularLocation>
</comment>
<comment type="tissue specificity">
    <text evidence="3">Widely expressed.</text>
</comment>
<comment type="PTM">
    <text evidence="1">Phosphorylation at Ser-36 by RPS6KB1 inhibits the leukotriene-C4 synthase activity.</text>
</comment>
<comment type="disruption phenotype">
    <text evidence="2">Deficient mice developed normally and are fertile. However mice display abnormal inflammatory and hypersensitivity reactions.</text>
</comment>
<comment type="similarity">
    <text evidence="4">Belongs to the MAPEG family.</text>
</comment>
<protein>
    <recommendedName>
        <fullName>Leukotriene C4 synthase</fullName>
        <shortName>LTC4 synthase</shortName>
        <ecNumber evidence="2 3">4.4.1.20</ecNumber>
    </recommendedName>
    <alternativeName>
        <fullName>Glutathione S-transferase LTC4</fullName>
        <ecNumber evidence="1">2.5.1.-</ecNumber>
    </alternativeName>
    <alternativeName>
        <fullName>Leukotriene-C(4) synthase</fullName>
    </alternativeName>
</protein>
<keyword id="KW-0002">3D-structure</keyword>
<keyword id="KW-0903">Direct protein sequencing</keyword>
<keyword id="KW-0256">Endoplasmic reticulum</keyword>
<keyword id="KW-0434">Leukotriene biosynthesis</keyword>
<keyword id="KW-0443">Lipid metabolism</keyword>
<keyword id="KW-0456">Lyase</keyword>
<keyword id="KW-0472">Membrane</keyword>
<keyword id="KW-0539">Nucleus</keyword>
<keyword id="KW-0597">Phosphoprotein</keyword>
<keyword id="KW-1185">Reference proteome</keyword>
<keyword id="KW-0808">Transferase</keyword>
<keyword id="KW-0812">Transmembrane</keyword>
<keyword id="KW-1133">Transmembrane helix</keyword>
<organism>
    <name type="scientific">Mus musculus</name>
    <name type="common">Mouse</name>
    <dbReference type="NCBI Taxonomy" id="10090"/>
    <lineage>
        <taxon>Eukaryota</taxon>
        <taxon>Metazoa</taxon>
        <taxon>Chordata</taxon>
        <taxon>Craniata</taxon>
        <taxon>Vertebrata</taxon>
        <taxon>Euteleostomi</taxon>
        <taxon>Mammalia</taxon>
        <taxon>Eutheria</taxon>
        <taxon>Euarchontoglires</taxon>
        <taxon>Glires</taxon>
        <taxon>Rodentia</taxon>
        <taxon>Myomorpha</taxon>
        <taxon>Muroidea</taxon>
        <taxon>Muridae</taxon>
        <taxon>Murinae</taxon>
        <taxon>Mus</taxon>
        <taxon>Mus</taxon>
    </lineage>
</organism>
<accession>Q60860</accession>
<accession>Q5SVR7</accession>
<accession>Q9QVS1</accession>
<sequence length="150" mass="16814">MKDEVALLATVTLVGVLLQAYFSLQVISARRAFHVSPPLTSGPPEFERVFRAQVNCSEYFPLFLATLWVAGIFFHEGAAALCGLFYLFARLRYFQGYARSAQLRLTPLYASARALWLLVAMAALGLLVHFLPGTLRTALFRWLQMLLPMA</sequence>
<gene>
    <name type="primary">Ltc4s</name>
</gene>